<organism>
    <name type="scientific">Aromatoleum aromaticum (strain DSM 19018 / LMG 30748 / EbN1)</name>
    <name type="common">Azoarcus sp. (strain EbN1)</name>
    <dbReference type="NCBI Taxonomy" id="76114"/>
    <lineage>
        <taxon>Bacteria</taxon>
        <taxon>Pseudomonadati</taxon>
        <taxon>Pseudomonadota</taxon>
        <taxon>Betaproteobacteria</taxon>
        <taxon>Rhodocyclales</taxon>
        <taxon>Rhodocyclaceae</taxon>
        <taxon>Aromatoleum</taxon>
    </lineage>
</organism>
<name>RL20_AROAE</name>
<proteinExistence type="inferred from homology"/>
<feature type="chain" id="PRO_0000243654" description="Large ribosomal subunit protein bL20">
    <location>
        <begin position="1"/>
        <end position="119"/>
    </location>
</feature>
<accession>Q5P7X8</accession>
<keyword id="KW-1185">Reference proteome</keyword>
<keyword id="KW-0687">Ribonucleoprotein</keyword>
<keyword id="KW-0689">Ribosomal protein</keyword>
<keyword id="KW-0694">RNA-binding</keyword>
<keyword id="KW-0699">rRNA-binding</keyword>
<gene>
    <name evidence="1" type="primary">rplT</name>
    <name type="ordered locus">AZOSEA04610</name>
    <name type="ORF">ebB25</name>
</gene>
<protein>
    <recommendedName>
        <fullName evidence="1">Large ribosomal subunit protein bL20</fullName>
    </recommendedName>
    <alternativeName>
        <fullName evidence="2">50S ribosomal protein L20</fullName>
    </alternativeName>
</protein>
<reference key="1">
    <citation type="journal article" date="2005" name="Arch. Microbiol.">
        <title>The genome sequence of an anaerobic aromatic-degrading denitrifying bacterium, strain EbN1.</title>
        <authorList>
            <person name="Rabus R."/>
            <person name="Kube M."/>
            <person name="Heider J."/>
            <person name="Beck A."/>
            <person name="Heitmann K."/>
            <person name="Widdel F."/>
            <person name="Reinhardt R."/>
        </authorList>
    </citation>
    <scope>NUCLEOTIDE SEQUENCE [LARGE SCALE GENOMIC DNA]</scope>
    <source>
        <strain>DSM 19018 / LMG 30748 / EbN1</strain>
    </source>
</reference>
<dbReference type="EMBL" id="CR555306">
    <property type="protein sequence ID" value="CAI06583.1"/>
    <property type="molecule type" value="Genomic_DNA"/>
</dbReference>
<dbReference type="RefSeq" id="WP_011236314.1">
    <property type="nucleotide sequence ID" value="NC_006513.1"/>
</dbReference>
<dbReference type="SMR" id="Q5P7X8"/>
<dbReference type="STRING" id="76114.ebB25"/>
<dbReference type="KEGG" id="eba:ebB25"/>
<dbReference type="eggNOG" id="COG0292">
    <property type="taxonomic scope" value="Bacteria"/>
</dbReference>
<dbReference type="HOGENOM" id="CLU_123265_0_1_4"/>
<dbReference type="OrthoDB" id="9808966at2"/>
<dbReference type="Proteomes" id="UP000006552">
    <property type="component" value="Chromosome"/>
</dbReference>
<dbReference type="GO" id="GO:1990904">
    <property type="term" value="C:ribonucleoprotein complex"/>
    <property type="evidence" value="ECO:0007669"/>
    <property type="project" value="UniProtKB-KW"/>
</dbReference>
<dbReference type="GO" id="GO:0005840">
    <property type="term" value="C:ribosome"/>
    <property type="evidence" value="ECO:0007669"/>
    <property type="project" value="UniProtKB-KW"/>
</dbReference>
<dbReference type="GO" id="GO:0019843">
    <property type="term" value="F:rRNA binding"/>
    <property type="evidence" value="ECO:0007669"/>
    <property type="project" value="UniProtKB-UniRule"/>
</dbReference>
<dbReference type="GO" id="GO:0003735">
    <property type="term" value="F:structural constituent of ribosome"/>
    <property type="evidence" value="ECO:0007669"/>
    <property type="project" value="InterPro"/>
</dbReference>
<dbReference type="GO" id="GO:0000027">
    <property type="term" value="P:ribosomal large subunit assembly"/>
    <property type="evidence" value="ECO:0007669"/>
    <property type="project" value="UniProtKB-UniRule"/>
</dbReference>
<dbReference type="GO" id="GO:0006412">
    <property type="term" value="P:translation"/>
    <property type="evidence" value="ECO:0007669"/>
    <property type="project" value="InterPro"/>
</dbReference>
<dbReference type="CDD" id="cd07026">
    <property type="entry name" value="Ribosomal_L20"/>
    <property type="match status" value="1"/>
</dbReference>
<dbReference type="FunFam" id="1.10.1900.20:FF:000001">
    <property type="entry name" value="50S ribosomal protein L20"/>
    <property type="match status" value="1"/>
</dbReference>
<dbReference type="Gene3D" id="6.10.160.10">
    <property type="match status" value="1"/>
</dbReference>
<dbReference type="Gene3D" id="1.10.1900.20">
    <property type="entry name" value="Ribosomal protein L20"/>
    <property type="match status" value="1"/>
</dbReference>
<dbReference type="HAMAP" id="MF_00382">
    <property type="entry name" value="Ribosomal_bL20"/>
    <property type="match status" value="1"/>
</dbReference>
<dbReference type="InterPro" id="IPR005813">
    <property type="entry name" value="Ribosomal_bL20"/>
</dbReference>
<dbReference type="InterPro" id="IPR049946">
    <property type="entry name" value="RIBOSOMAL_L20_CS"/>
</dbReference>
<dbReference type="InterPro" id="IPR035566">
    <property type="entry name" value="Ribosomal_protein_bL20_C"/>
</dbReference>
<dbReference type="NCBIfam" id="TIGR01032">
    <property type="entry name" value="rplT_bact"/>
    <property type="match status" value="1"/>
</dbReference>
<dbReference type="PANTHER" id="PTHR10986">
    <property type="entry name" value="39S RIBOSOMAL PROTEIN L20"/>
    <property type="match status" value="1"/>
</dbReference>
<dbReference type="Pfam" id="PF00453">
    <property type="entry name" value="Ribosomal_L20"/>
    <property type="match status" value="1"/>
</dbReference>
<dbReference type="PRINTS" id="PR00062">
    <property type="entry name" value="RIBOSOMALL20"/>
</dbReference>
<dbReference type="SUPFAM" id="SSF74731">
    <property type="entry name" value="Ribosomal protein L20"/>
    <property type="match status" value="1"/>
</dbReference>
<dbReference type="PROSITE" id="PS00937">
    <property type="entry name" value="RIBOSOMAL_L20"/>
    <property type="match status" value="1"/>
</dbReference>
<evidence type="ECO:0000255" key="1">
    <source>
        <dbReference type="HAMAP-Rule" id="MF_00382"/>
    </source>
</evidence>
<evidence type="ECO:0000305" key="2"/>
<comment type="function">
    <text evidence="1">Binds directly to 23S ribosomal RNA and is necessary for the in vitro assembly process of the 50S ribosomal subunit. It is not involved in the protein synthesizing functions of that subunit.</text>
</comment>
<comment type="similarity">
    <text evidence="1">Belongs to the bacterial ribosomal protein bL20 family.</text>
</comment>
<sequence>MSRVKRGVTARARHKKVLDQAKGYRGRRKNVYRIAKQAVMKAGQYAYRDRRQRKRQFRALWIARINAAAREVGLTYSTFMNGLKKAAIEVDRKVLADLAVFDKPAFAALADQARAKLAA</sequence>